<evidence type="ECO:0000250" key="1">
    <source>
        <dbReference type="UniProtKB" id="O55034"/>
    </source>
</evidence>
<evidence type="ECO:0000250" key="2">
    <source>
        <dbReference type="UniProtKB" id="Q9JJF2"/>
    </source>
</evidence>
<evidence type="ECO:0000255" key="3"/>
<evidence type="ECO:0000255" key="4">
    <source>
        <dbReference type="PROSITE-ProRule" id="PRU00802"/>
    </source>
</evidence>
<evidence type="ECO:0000256" key="5">
    <source>
        <dbReference type="SAM" id="MobiDB-lite"/>
    </source>
</evidence>
<evidence type="ECO:0000269" key="6">
    <source>
    </source>
</evidence>
<evidence type="ECO:0000305" key="7"/>
<sequence length="437" mass="48165">MRRSSRPGSASSSRKHTPNFFSENSSMSITSEDSKGLRSAEPGPGEPEGRRARGPSCGEPALSAGVPGGTTWAGSSQQKPAPRSHNWQTACGAATVRGGASEPTGSPVVSEEPLDLLPTLDLRQEMPPPRVFKSFLSLLFQGLSVLLSLAGDVLVSMYREVCSIRFLFTAVSLLSLFLSAFWLGLLYLVSPLENEPKEMLTLSEYHERVRSQGQQLQQLQAELDKLHKEVSTVRAANSERVAKLVFQRLNEDFVRKPDYALSSVGASIDLQKTSHDYADRNTAYFWNRFSFWNYARPPTVILEPHVFPGNCWAFEGDQGQVVIQLPGRVQLSDITLQHPPPSVEHTGGANSAPRDFAVFGLQVYDETEVSLGKFTFDVEKSEIQTFHLQNDPPAAFPKVKIQILSNWGHPRFTCLYRVRAHGVRTSEGAEGSAQGPH</sequence>
<feature type="chain" id="PRO_0000218916" description="Sperm-associated antigen 4 protein">
    <location>
        <begin position="1"/>
        <end position="437"/>
    </location>
</feature>
<feature type="transmembrane region" description="Helical" evidence="3">
    <location>
        <begin position="135"/>
        <end position="155"/>
    </location>
</feature>
<feature type="transmembrane region" description="Helical" evidence="3">
    <location>
        <begin position="166"/>
        <end position="186"/>
    </location>
</feature>
<feature type="domain" description="SUN" evidence="4">
    <location>
        <begin position="265"/>
        <end position="425"/>
    </location>
</feature>
<feature type="region of interest" description="Disordered" evidence="5">
    <location>
        <begin position="1"/>
        <end position="88"/>
    </location>
</feature>
<feature type="coiled-coil region" evidence="3">
    <location>
        <begin position="197"/>
        <end position="244"/>
    </location>
</feature>
<feature type="compositionally biased region" description="Low complexity" evidence="5">
    <location>
        <begin position="1"/>
        <end position="12"/>
    </location>
</feature>
<feature type="compositionally biased region" description="Polar residues" evidence="5">
    <location>
        <begin position="19"/>
        <end position="31"/>
    </location>
</feature>
<feature type="compositionally biased region" description="Polar residues" evidence="5">
    <location>
        <begin position="72"/>
        <end position="88"/>
    </location>
</feature>
<comment type="function">
    <text evidence="1 2">Involved in spermatogenesis. Required for sperm head formation but not required to establish and maintain general polarity of the sperm head. Required for anchoring and organization of the manchette. Required for targeting of SUN3 and probably SYNE1 through a probable SUN1:SYNE3 LINC complex to the nuclear envelope and involved in accurate posterior sperm head localization of the complex. May anchor SUN3 the nuclear envelope. Involved in maintenance of the nuclear envelope integrity. May assist the organization and assembly of outer dense fibers (ODFs), a specific structure of the sperm tail.</text>
</comment>
<comment type="subunit">
    <text evidence="1 6">Homodimer. Interacts with ODF1. May associate with microtubules (By similarity). Interacts with SUN3 and SYNE1; suggesting the formation of a spermatogenesis-specific LINC complex; a SUN domain-based heterotrimer with SUN3 may associate with SYNE1 (By similarity). Interacts with SEPT12 and LMNB1; during spermatogenesis (PubMed:25775403).</text>
</comment>
<comment type="interaction">
    <interactant intactId="EBI-10819434">
        <id>Q9NPE6</id>
    </interactant>
    <interactant intactId="EBI-348517">
        <id>O95870</id>
        <label>ABHD16A</label>
    </interactant>
    <organismsDiffer>false</organismsDiffer>
    <experiments>3</experiments>
</comment>
<comment type="interaction">
    <interactant intactId="EBI-10819434">
        <id>Q9NPE6</id>
    </interactant>
    <interactant intactId="EBI-1172335">
        <id>P07306</id>
        <label>ASGR1</label>
    </interactant>
    <organismsDiffer>false</organismsDiffer>
    <experiments>3</experiments>
</comment>
<comment type="interaction">
    <interactant intactId="EBI-10819434">
        <id>Q9NPE6</id>
    </interactant>
    <interactant intactId="EBI-3922513">
        <id>O95393</id>
        <label>BMP10</label>
    </interactant>
    <organismsDiffer>false</organismsDiffer>
    <experiments>3</experiments>
</comment>
<comment type="interaction">
    <interactant intactId="EBI-10819434">
        <id>Q9NPE6</id>
    </interactant>
    <interactant intactId="EBI-12917736">
        <id>Q8TDX6-3</id>
        <label>CSGALNACT1</label>
    </interactant>
    <organismsDiffer>false</organismsDiffer>
    <experiments>3</experiments>
</comment>
<comment type="interaction">
    <interactant intactId="EBI-10819434">
        <id>Q9NPE6</id>
    </interactant>
    <interactant intactId="EBI-1752413">
        <id>P78329</id>
        <label>CYP4F2</label>
    </interactant>
    <organismsDiffer>false</organismsDiffer>
    <experiments>3</experiments>
</comment>
<comment type="interaction">
    <interactant intactId="EBI-10819434">
        <id>Q9NPE6</id>
    </interactant>
    <interactant intactId="EBI-10976398">
        <id>Q7Z2K6</id>
        <label>ERMP1</label>
    </interactant>
    <organismsDiffer>false</organismsDiffer>
    <experiments>3</experiments>
</comment>
<comment type="interaction">
    <interactant intactId="EBI-10819434">
        <id>Q9NPE6</id>
    </interactant>
    <interactant intactId="EBI-4401517">
        <id>O14653</id>
        <label>GOSR2</label>
    </interactant>
    <organismsDiffer>false</organismsDiffer>
    <experiments>3</experiments>
</comment>
<comment type="interaction">
    <interactant intactId="EBI-10819434">
        <id>Q9NPE6</id>
    </interactant>
    <interactant intactId="EBI-720480">
        <id>P24593</id>
        <label>IGFBP5</label>
    </interactant>
    <organismsDiffer>false</organismsDiffer>
    <experiments>3</experiments>
</comment>
<comment type="interaction">
    <interactant intactId="EBI-10819434">
        <id>Q9NPE6</id>
    </interactant>
    <interactant intactId="EBI-12070086">
        <id>Q5J8X5</id>
        <label>MS4A13</label>
    </interactant>
    <organismsDiffer>false</organismsDiffer>
    <experiments>3</experiments>
</comment>
<comment type="interaction">
    <interactant intactId="EBI-10819434">
        <id>Q9NPE6</id>
    </interactant>
    <interactant intactId="EBI-10262547">
        <id>Q8IXM6</id>
        <label>NRM</label>
    </interactant>
    <organismsDiffer>false</organismsDiffer>
    <experiments>3</experiments>
</comment>
<comment type="interaction">
    <interactant intactId="EBI-10819434">
        <id>Q9NPE6</id>
    </interactant>
    <interactant intactId="EBI-12957629">
        <id>P0DJD7</id>
        <label>PGA4</label>
    </interactant>
    <organismsDiffer>false</organismsDiffer>
    <experiments>3</experiments>
</comment>
<comment type="interaction">
    <interactant intactId="EBI-10819434">
        <id>Q9NPE6</id>
    </interactant>
    <interactant intactId="EBI-692836">
        <id>P26678</id>
        <label>PLN</label>
    </interactant>
    <organismsDiffer>false</organismsDiffer>
    <experiments>3</experiments>
</comment>
<comment type="interaction">
    <interactant intactId="EBI-10819434">
        <id>Q9NPE6</id>
    </interactant>
    <interactant intactId="EBI-742898">
        <id>P43378</id>
        <label>PTPN9</label>
    </interactant>
    <organismsDiffer>false</organismsDiffer>
    <experiments>3</experiments>
</comment>
<comment type="interaction">
    <interactant intactId="EBI-10819434">
        <id>Q9NPE6</id>
    </interactant>
    <interactant intactId="EBI-8636004">
        <id>Q96GQ5</id>
        <label>RUSF1</label>
    </interactant>
    <organismsDiffer>false</organismsDiffer>
    <experiments>3</experiments>
</comment>
<comment type="interaction">
    <interactant intactId="EBI-10819434">
        <id>Q9NPE6</id>
    </interactant>
    <interactant intactId="EBI-4403649">
        <id>Q969E2</id>
        <label>SCAMP4</label>
    </interactant>
    <organismsDiffer>false</organismsDiffer>
    <experiments>3</experiments>
</comment>
<comment type="interaction">
    <interactant intactId="EBI-10819434">
        <id>Q9NPE6</id>
    </interactant>
    <interactant intactId="EBI-2684237">
        <id>O00767</id>
        <label>SCD</label>
    </interactant>
    <organismsDiffer>false</organismsDiffer>
    <experiments>3</experiments>
</comment>
<comment type="interaction">
    <interactant intactId="EBI-10819434">
        <id>Q9NPE6</id>
    </interactant>
    <interactant intactId="EBI-8652744">
        <id>Q96IW7</id>
        <label>SEC22A</label>
    </interactant>
    <organismsDiffer>false</organismsDiffer>
    <experiments>3</experiments>
</comment>
<comment type="interaction">
    <interactant intactId="EBI-10819434">
        <id>Q9NPE6</id>
    </interactant>
    <interactant intactId="EBI-2585067">
        <id>Q8IYM1</id>
        <label>SEPTIN12</label>
    </interactant>
    <organismsDiffer>false</organismsDiffer>
    <experiments>6</experiments>
</comment>
<comment type="interaction">
    <interactant intactId="EBI-10819434">
        <id>Q9NPE6</id>
    </interactant>
    <interactant intactId="EBI-10262251">
        <id>Q8IWU4</id>
        <label>SLC30A8</label>
    </interactant>
    <organismsDiffer>false</organismsDiffer>
    <experiments>3</experiments>
</comment>
<comment type="interaction">
    <interactant intactId="EBI-10819434">
        <id>Q9NPE6</id>
    </interactant>
    <interactant intactId="EBI-13068796">
        <id>Q8TC36</id>
        <label>SUN5</label>
    </interactant>
    <organismsDiffer>false</organismsDiffer>
    <experiments>3</experiments>
</comment>
<comment type="interaction">
    <interactant intactId="EBI-10819434">
        <id>Q9NPE6</id>
    </interactant>
    <interactant intactId="EBI-727322">
        <id>Q9BXJ8</id>
        <label>TMEM120A</label>
    </interactant>
    <organismsDiffer>false</organismsDiffer>
    <experiments>3</experiments>
</comment>
<comment type="interaction">
    <interactant intactId="EBI-10819434">
        <id>Q9NPE6</id>
    </interactant>
    <interactant intactId="EBI-13046724">
        <id>Q14656</id>
        <label>TMEM187</label>
    </interactant>
    <organismsDiffer>false</organismsDiffer>
    <experiments>3</experiments>
</comment>
<comment type="interaction">
    <interactant intactId="EBI-10819434">
        <id>Q9NPE6</id>
    </interactant>
    <interactant intactId="EBI-2852148">
        <id>Q9H2L4</id>
        <label>TMEM60</label>
    </interactant>
    <organismsDiffer>false</organismsDiffer>
    <experiments>3</experiments>
</comment>
<comment type="interaction">
    <interactant intactId="EBI-10819434">
        <id>Q9NPE6</id>
    </interactant>
    <interactant intactId="EBI-12003398">
        <id>Q9H2S6-2</id>
        <label>TNMD</label>
    </interactant>
    <organismsDiffer>false</organismsDiffer>
    <experiments>3</experiments>
</comment>
<comment type="interaction">
    <interactant intactId="EBI-10819434">
        <id>Q9NPE6</id>
    </interactant>
    <interactant intactId="EBI-12195249">
        <id>Q5TGU0</id>
        <label>TSPO2</label>
    </interactant>
    <organismsDiffer>false</organismsDiffer>
    <experiments>3</experiments>
</comment>
<comment type="interaction">
    <interactant intactId="EBI-10819434">
        <id>Q9NPE6</id>
    </interactant>
    <interactant intactId="EBI-11988865">
        <id>A5PKU2</id>
        <label>TUSC5</label>
    </interactant>
    <organismsDiffer>false</organismsDiffer>
    <experiments>3</experiments>
</comment>
<comment type="interaction">
    <interactant intactId="EBI-10819434">
        <id>Q9NPE6</id>
    </interactant>
    <interactant intactId="EBI-10254561">
        <id>Q6UX98</id>
        <label>ZDHHC24</label>
    </interactant>
    <organismsDiffer>false</organismsDiffer>
    <experiments>3</experiments>
</comment>
<comment type="subcellular location">
    <subcellularLocation>
        <location evidence="7">Membrane</location>
        <topology evidence="7">Multi-pass membrane protein</topology>
    </subcellularLocation>
    <subcellularLocation>
        <location evidence="1">Cytoplasm</location>
        <location evidence="1">Cytoskeleton</location>
    </subcellularLocation>
    <subcellularLocation>
        <location evidence="1">Cytoplasm</location>
        <location evidence="1">Cytoskeleton</location>
        <location evidence="1">Flagellum axoneme</location>
    </subcellularLocation>
    <subcellularLocation>
        <location evidence="2">Nucleus envelope</location>
    </subcellularLocation>
    <subcellularLocation>
        <location evidence="2">Nucleus inner membrane</location>
    </subcellularLocation>
    <text evidence="1 6">In spermatids, it is localized in the transient manchette and in the axoneme of elongating spermatids and epididymal sperm (By similarity). Colocalized with SEPT12 at the nuclear periphery in round spermatids, at sperm neck in elongated spermatids and at midpiece regions in ejaculated spermatozoa (PubMed:25775403).</text>
</comment>
<comment type="tissue specificity">
    <text evidence="6">Predominantly epressed in testis. Expressed in ejaculated spermatozoa (at protein level).</text>
</comment>
<comment type="caution">
    <text evidence="7">Although transmembrane domains are strongly predicted, they may rather represent hydrophobic globular domains associated with microtubules.</text>
</comment>
<comment type="sequence caution" evidence="7">
    <conflict type="erroneous gene model prediction">
        <sequence resource="EMBL-CDS" id="AAC32052"/>
    </conflict>
</comment>
<protein>
    <recommendedName>
        <fullName>Sperm-associated antigen 4 protein</fullName>
    </recommendedName>
    <alternativeName>
        <fullName>Outer dense fiber-associated protein SPAG4</fullName>
    </alternativeName>
    <alternativeName>
        <fullName>SUN domain-containing protein 4</fullName>
    </alternativeName>
</protein>
<proteinExistence type="evidence at protein level"/>
<gene>
    <name type="primary">SPAG4</name>
    <name type="synonym">SUN4</name>
</gene>
<reference key="1">
    <citation type="journal article" date="2004" name="Cell Tissue Res.">
        <title>Human sperm associated antigen 4 (SPAG4) is a potential cancer marker.</title>
        <authorList>
            <person name="Kennedy C."/>
            <person name="Sebire K."/>
            <person name="De Kretser D.M."/>
            <person name="O'Bryan M.K."/>
        </authorList>
    </citation>
    <scope>NUCLEOTIDE SEQUENCE [GENOMIC DNA / MRNA]</scope>
</reference>
<reference key="2">
    <citation type="journal article" date="2001" name="Nature">
        <title>The DNA sequence and comparative analysis of human chromosome 20.</title>
        <authorList>
            <person name="Deloukas P."/>
            <person name="Matthews L.H."/>
            <person name="Ashurst J.L."/>
            <person name="Burton J."/>
            <person name="Gilbert J.G.R."/>
            <person name="Jones M."/>
            <person name="Stavrides G."/>
            <person name="Almeida J.P."/>
            <person name="Babbage A.K."/>
            <person name="Bagguley C.L."/>
            <person name="Bailey J."/>
            <person name="Barlow K.F."/>
            <person name="Bates K.N."/>
            <person name="Beard L.M."/>
            <person name="Beare D.M."/>
            <person name="Beasley O.P."/>
            <person name="Bird C.P."/>
            <person name="Blakey S.E."/>
            <person name="Bridgeman A.M."/>
            <person name="Brown A.J."/>
            <person name="Buck D."/>
            <person name="Burrill W.D."/>
            <person name="Butler A.P."/>
            <person name="Carder C."/>
            <person name="Carter N.P."/>
            <person name="Chapman J.C."/>
            <person name="Clamp M."/>
            <person name="Clark G."/>
            <person name="Clark L.N."/>
            <person name="Clark S.Y."/>
            <person name="Clee C.M."/>
            <person name="Clegg S."/>
            <person name="Cobley V.E."/>
            <person name="Collier R.E."/>
            <person name="Connor R.E."/>
            <person name="Corby N.R."/>
            <person name="Coulson A."/>
            <person name="Coville G.J."/>
            <person name="Deadman R."/>
            <person name="Dhami P.D."/>
            <person name="Dunn M."/>
            <person name="Ellington A.G."/>
            <person name="Frankland J.A."/>
            <person name="Fraser A."/>
            <person name="French L."/>
            <person name="Garner P."/>
            <person name="Grafham D.V."/>
            <person name="Griffiths C."/>
            <person name="Griffiths M.N.D."/>
            <person name="Gwilliam R."/>
            <person name="Hall R.E."/>
            <person name="Hammond S."/>
            <person name="Harley J.L."/>
            <person name="Heath P.D."/>
            <person name="Ho S."/>
            <person name="Holden J.L."/>
            <person name="Howden P.J."/>
            <person name="Huckle E."/>
            <person name="Hunt A.R."/>
            <person name="Hunt S.E."/>
            <person name="Jekosch K."/>
            <person name="Johnson C.M."/>
            <person name="Johnson D."/>
            <person name="Kay M.P."/>
            <person name="Kimberley A.M."/>
            <person name="King A."/>
            <person name="Knights A."/>
            <person name="Laird G.K."/>
            <person name="Lawlor S."/>
            <person name="Lehvaeslaiho M.H."/>
            <person name="Leversha M.A."/>
            <person name="Lloyd C."/>
            <person name="Lloyd D.M."/>
            <person name="Lovell J.D."/>
            <person name="Marsh V.L."/>
            <person name="Martin S.L."/>
            <person name="McConnachie L.J."/>
            <person name="McLay K."/>
            <person name="McMurray A.A."/>
            <person name="Milne S.A."/>
            <person name="Mistry D."/>
            <person name="Moore M.J.F."/>
            <person name="Mullikin J.C."/>
            <person name="Nickerson T."/>
            <person name="Oliver K."/>
            <person name="Parker A."/>
            <person name="Patel R."/>
            <person name="Pearce T.A.V."/>
            <person name="Peck A.I."/>
            <person name="Phillimore B.J.C.T."/>
            <person name="Prathalingam S.R."/>
            <person name="Plumb R.W."/>
            <person name="Ramsay H."/>
            <person name="Rice C.M."/>
            <person name="Ross M.T."/>
            <person name="Scott C.E."/>
            <person name="Sehra H.K."/>
            <person name="Shownkeen R."/>
            <person name="Sims S."/>
            <person name="Skuce C.D."/>
            <person name="Smith M.L."/>
            <person name="Soderlund C."/>
            <person name="Steward C.A."/>
            <person name="Sulston J.E."/>
            <person name="Swann R.M."/>
            <person name="Sycamore N."/>
            <person name="Taylor R."/>
            <person name="Tee L."/>
            <person name="Thomas D.W."/>
            <person name="Thorpe A."/>
            <person name="Tracey A."/>
            <person name="Tromans A.C."/>
            <person name="Vaudin M."/>
            <person name="Wall M."/>
            <person name="Wallis J.M."/>
            <person name="Whitehead S.L."/>
            <person name="Whittaker P."/>
            <person name="Willey D.L."/>
            <person name="Williams L."/>
            <person name="Williams S.A."/>
            <person name="Wilming L."/>
            <person name="Wray P.W."/>
            <person name="Hubbard T."/>
            <person name="Durbin R.M."/>
            <person name="Bentley D.R."/>
            <person name="Beck S."/>
            <person name="Rogers J."/>
        </authorList>
    </citation>
    <scope>NUCLEOTIDE SEQUENCE [LARGE SCALE GENOMIC DNA]</scope>
</reference>
<reference key="3">
    <citation type="journal article" date="1998" name="Cytogenet. Cell Genet.">
        <title>A novel testis-specific gene, SPAG4, whose product interacts specifically with outer dense fiber protein ODF27, maps to human chromosome 20q11.2.</title>
        <authorList>
            <person name="Tarnasky H."/>
            <person name="Gill D."/>
            <person name="Murthy S."/>
            <person name="Shao X."/>
            <person name="Demetrick D.J."/>
            <person name="van der Hoorn F.A."/>
        </authorList>
    </citation>
    <scope>NUCLEOTIDE SEQUENCE [GENOMIC DNA] OF 265-303</scope>
</reference>
<reference key="4">
    <citation type="journal article" date="2015" name="PLoS ONE">
        <title>SEPT12/SPAG4/LAMINB1 complexes are required for maintaining the integrity of the nuclear envelope in postmeiotic male germ cells.</title>
        <authorList>
            <person name="Yeh C.H."/>
            <person name="Kuo P.L."/>
            <person name="Wang Y.Y."/>
            <person name="Wu Y.Y."/>
            <person name="Chen M.F."/>
            <person name="Lin D.Y."/>
            <person name="Lai T.H."/>
            <person name="Chiang H.S."/>
            <person name="Lin Y.H."/>
        </authorList>
    </citation>
    <scope>INTERACTION WITH SEPT12 AND LMNB1</scope>
    <scope>TISSUE SPECIFICITY</scope>
    <scope>SUBCELLULAR LOCATION</scope>
</reference>
<organism>
    <name type="scientific">Homo sapiens</name>
    <name type="common">Human</name>
    <dbReference type="NCBI Taxonomy" id="9606"/>
    <lineage>
        <taxon>Eukaryota</taxon>
        <taxon>Metazoa</taxon>
        <taxon>Chordata</taxon>
        <taxon>Craniata</taxon>
        <taxon>Vertebrata</taxon>
        <taxon>Euteleostomi</taxon>
        <taxon>Mammalia</taxon>
        <taxon>Eutheria</taxon>
        <taxon>Euarchontoglires</taxon>
        <taxon>Primates</taxon>
        <taxon>Haplorrhini</taxon>
        <taxon>Catarrhini</taxon>
        <taxon>Hominidae</taxon>
        <taxon>Homo</taxon>
    </lineage>
</organism>
<accession>Q9NPE6</accession>
<accession>O43648</accession>
<name>SPAG4_HUMAN</name>
<keyword id="KW-0966">Cell projection</keyword>
<keyword id="KW-0969">Cilium</keyword>
<keyword id="KW-0175">Coiled coil</keyword>
<keyword id="KW-0963">Cytoplasm</keyword>
<keyword id="KW-0206">Cytoskeleton</keyword>
<keyword id="KW-0221">Differentiation</keyword>
<keyword id="KW-0282">Flagellum</keyword>
<keyword id="KW-0472">Membrane</keyword>
<keyword id="KW-0539">Nucleus</keyword>
<keyword id="KW-1267">Proteomics identification</keyword>
<keyword id="KW-1185">Reference proteome</keyword>
<keyword id="KW-0744">Spermatogenesis</keyword>
<keyword id="KW-0812">Transmembrane</keyword>
<keyword id="KW-1133">Transmembrane helix</keyword>
<dbReference type="EMBL" id="AF262992">
    <property type="protein sequence ID" value="AAF75267.1"/>
    <property type="molecule type" value="mRNA"/>
</dbReference>
<dbReference type="EMBL" id="AF262993">
    <property type="protein sequence ID" value="AAF75268.1"/>
    <property type="molecule type" value="Genomic_DNA"/>
</dbReference>
<dbReference type="EMBL" id="AL109827">
    <property type="status" value="NOT_ANNOTATED_CDS"/>
    <property type="molecule type" value="Genomic_DNA"/>
</dbReference>
<dbReference type="EMBL" id="AF043344">
    <property type="protein sequence ID" value="AAC32052.1"/>
    <property type="status" value="ALT_SEQ"/>
    <property type="molecule type" value="Genomic_DNA"/>
</dbReference>
<dbReference type="CCDS" id="CCDS13259.1"/>
<dbReference type="RefSeq" id="NP_003107.1">
    <property type="nucleotide sequence ID" value="NM_003116.3"/>
</dbReference>
<dbReference type="SMR" id="Q9NPE6"/>
<dbReference type="BioGRID" id="112558">
    <property type="interactions" value="82"/>
</dbReference>
<dbReference type="FunCoup" id="Q9NPE6">
    <property type="interactions" value="47"/>
</dbReference>
<dbReference type="IntAct" id="Q9NPE6">
    <property type="interactions" value="31"/>
</dbReference>
<dbReference type="STRING" id="9606.ENSP00000363391"/>
<dbReference type="iPTMnet" id="Q9NPE6"/>
<dbReference type="PhosphoSitePlus" id="Q9NPE6"/>
<dbReference type="BioMuta" id="SPAG4"/>
<dbReference type="DMDM" id="27805726"/>
<dbReference type="MassIVE" id="Q9NPE6"/>
<dbReference type="PaxDb" id="9606-ENSP00000363391"/>
<dbReference type="PeptideAtlas" id="Q9NPE6"/>
<dbReference type="ProteomicsDB" id="81980"/>
<dbReference type="Antibodypedia" id="26200">
    <property type="antibodies" value="99 antibodies from 19 providers"/>
</dbReference>
<dbReference type="DNASU" id="6676"/>
<dbReference type="Ensembl" id="ENST00000374273.8">
    <property type="protein sequence ID" value="ENSP00000363391.3"/>
    <property type="gene ID" value="ENSG00000061656.11"/>
</dbReference>
<dbReference type="GeneID" id="6676"/>
<dbReference type="KEGG" id="hsa:6676"/>
<dbReference type="MANE-Select" id="ENST00000374273.8">
    <property type="protein sequence ID" value="ENSP00000363391.3"/>
    <property type="RefSeq nucleotide sequence ID" value="NM_003116.3"/>
    <property type="RefSeq protein sequence ID" value="NP_003107.1"/>
</dbReference>
<dbReference type="UCSC" id="uc002xdb.2">
    <property type="organism name" value="human"/>
</dbReference>
<dbReference type="AGR" id="HGNC:11214"/>
<dbReference type="CTD" id="6676"/>
<dbReference type="DisGeNET" id="6676"/>
<dbReference type="GeneCards" id="SPAG4"/>
<dbReference type="HGNC" id="HGNC:11214">
    <property type="gene designation" value="SPAG4"/>
</dbReference>
<dbReference type="HPA" id="ENSG00000061656">
    <property type="expression patterns" value="Group enriched (pancreas, testis)"/>
</dbReference>
<dbReference type="MIM" id="603038">
    <property type="type" value="gene"/>
</dbReference>
<dbReference type="neXtProt" id="NX_Q9NPE6"/>
<dbReference type="OpenTargets" id="ENSG00000061656"/>
<dbReference type="PharmGKB" id="PA36050"/>
<dbReference type="VEuPathDB" id="HostDB:ENSG00000061656"/>
<dbReference type="eggNOG" id="KOG2687">
    <property type="taxonomic scope" value="Eukaryota"/>
</dbReference>
<dbReference type="GeneTree" id="ENSGT00940000161566"/>
<dbReference type="HOGENOM" id="CLU_043737_2_0_1"/>
<dbReference type="InParanoid" id="Q9NPE6"/>
<dbReference type="OMA" id="PRKHTPN"/>
<dbReference type="OrthoDB" id="342281at2759"/>
<dbReference type="PAN-GO" id="Q9NPE6">
    <property type="GO annotations" value="4 GO annotations based on evolutionary models"/>
</dbReference>
<dbReference type="PhylomeDB" id="Q9NPE6"/>
<dbReference type="TreeFam" id="TF323915"/>
<dbReference type="PathwayCommons" id="Q9NPE6"/>
<dbReference type="SignaLink" id="Q9NPE6"/>
<dbReference type="SIGNOR" id="Q9NPE6"/>
<dbReference type="BioGRID-ORCS" id="6676">
    <property type="hits" value="25 hits in 1158 CRISPR screens"/>
</dbReference>
<dbReference type="ChiTaRS" id="SPAG4">
    <property type="organism name" value="human"/>
</dbReference>
<dbReference type="GenomeRNAi" id="6676"/>
<dbReference type="Pharos" id="Q9NPE6">
    <property type="development level" value="Tbio"/>
</dbReference>
<dbReference type="PRO" id="PR:Q9NPE6"/>
<dbReference type="Proteomes" id="UP000005640">
    <property type="component" value="Chromosome 20"/>
</dbReference>
<dbReference type="RNAct" id="Q9NPE6">
    <property type="molecule type" value="protein"/>
</dbReference>
<dbReference type="Bgee" id="ENSG00000061656">
    <property type="expression patterns" value="Expressed in body of pancreas and 112 other cell types or tissues"/>
</dbReference>
<dbReference type="ExpressionAtlas" id="Q9NPE6">
    <property type="expression patterns" value="baseline and differential"/>
</dbReference>
<dbReference type="GO" id="GO:0005737">
    <property type="term" value="C:cytoplasm"/>
    <property type="evidence" value="ECO:0007669"/>
    <property type="project" value="UniProtKB-KW"/>
</dbReference>
<dbReference type="GO" id="GO:0005856">
    <property type="term" value="C:cytoskeleton"/>
    <property type="evidence" value="ECO:0007669"/>
    <property type="project" value="UniProtKB-SubCell"/>
</dbReference>
<dbReference type="GO" id="GO:0034993">
    <property type="term" value="C:meiotic nuclear membrane microtubule tethering complex"/>
    <property type="evidence" value="ECO:0000318"/>
    <property type="project" value="GO_Central"/>
</dbReference>
<dbReference type="GO" id="GO:0031514">
    <property type="term" value="C:motile cilium"/>
    <property type="evidence" value="ECO:0007669"/>
    <property type="project" value="UniProtKB-KW"/>
</dbReference>
<dbReference type="GO" id="GO:0005635">
    <property type="term" value="C:nuclear envelope"/>
    <property type="evidence" value="ECO:0000318"/>
    <property type="project" value="GO_Central"/>
</dbReference>
<dbReference type="GO" id="GO:0005637">
    <property type="term" value="C:nuclear inner membrane"/>
    <property type="evidence" value="ECO:0007669"/>
    <property type="project" value="UniProtKB-SubCell"/>
</dbReference>
<dbReference type="GO" id="GO:0043495">
    <property type="term" value="F:protein-membrane adaptor activity"/>
    <property type="evidence" value="ECO:0000318"/>
    <property type="project" value="GO_Central"/>
</dbReference>
<dbReference type="GO" id="GO:0005198">
    <property type="term" value="F:structural molecule activity"/>
    <property type="evidence" value="ECO:0000304"/>
    <property type="project" value="ProtInc"/>
</dbReference>
<dbReference type="GO" id="GO:0030154">
    <property type="term" value="P:cell differentiation"/>
    <property type="evidence" value="ECO:0007669"/>
    <property type="project" value="UniProtKB-KW"/>
</dbReference>
<dbReference type="GO" id="GO:0007283">
    <property type="term" value="P:spermatogenesis"/>
    <property type="evidence" value="ECO:0000304"/>
    <property type="project" value="ProtInc"/>
</dbReference>
<dbReference type="FunFam" id="2.60.120.260:FF:000032">
    <property type="entry name" value="Sperm associated antigen 4 (Predicted)"/>
    <property type="match status" value="1"/>
</dbReference>
<dbReference type="Gene3D" id="2.60.120.260">
    <property type="entry name" value="Galactose-binding domain-like"/>
    <property type="match status" value="1"/>
</dbReference>
<dbReference type="InterPro" id="IPR045119">
    <property type="entry name" value="SUN1-5"/>
</dbReference>
<dbReference type="InterPro" id="IPR012919">
    <property type="entry name" value="SUN_dom"/>
</dbReference>
<dbReference type="PANTHER" id="PTHR12911">
    <property type="entry name" value="SAD1/UNC-84-LIKE PROTEIN-RELATED"/>
    <property type="match status" value="1"/>
</dbReference>
<dbReference type="PANTHER" id="PTHR12911:SF16">
    <property type="entry name" value="SPERM-ASSOCIATED ANTIGEN 4 PROTEIN"/>
    <property type="match status" value="1"/>
</dbReference>
<dbReference type="Pfam" id="PF07738">
    <property type="entry name" value="Sad1_UNC"/>
    <property type="match status" value="1"/>
</dbReference>
<dbReference type="PROSITE" id="PS51469">
    <property type="entry name" value="SUN"/>
    <property type="match status" value="1"/>
</dbReference>